<name>Y514_MYCPN</name>
<accession>P75272</accession>
<feature type="chain" id="PRO_0000210692" description="Uncharacterized protein MPN_514">
    <location>
        <begin position="1"/>
        <end position="120"/>
    </location>
</feature>
<proteinExistence type="predicted"/>
<gene>
    <name type="ordered locus">MPN_514</name>
    <name type="ORF">F04_orf120</name>
    <name type="ORF">MP328</name>
</gene>
<reference key="1">
    <citation type="journal article" date="1996" name="Nucleic Acids Res.">
        <title>Complete sequence analysis of the genome of the bacterium Mycoplasma pneumoniae.</title>
        <authorList>
            <person name="Himmelreich R."/>
            <person name="Hilbert H."/>
            <person name="Plagens H."/>
            <person name="Pirkl E."/>
            <person name="Li B.-C."/>
            <person name="Herrmann R."/>
        </authorList>
    </citation>
    <scope>NUCLEOTIDE SEQUENCE [LARGE SCALE GENOMIC DNA]</scope>
    <source>
        <strain>ATCC 29342 / M129 / Subtype 1</strain>
    </source>
</reference>
<keyword id="KW-1185">Reference proteome</keyword>
<organism>
    <name type="scientific">Mycoplasma pneumoniae (strain ATCC 29342 / M129 / Subtype 1)</name>
    <name type="common">Mycoplasmoides pneumoniae</name>
    <dbReference type="NCBI Taxonomy" id="272634"/>
    <lineage>
        <taxon>Bacteria</taxon>
        <taxon>Bacillati</taxon>
        <taxon>Mycoplasmatota</taxon>
        <taxon>Mycoplasmoidales</taxon>
        <taxon>Mycoplasmoidaceae</taxon>
        <taxon>Mycoplasmoides</taxon>
    </lineage>
</organism>
<dbReference type="EMBL" id="U00089">
    <property type="protein sequence ID" value="AAB95976.1"/>
    <property type="molecule type" value="Genomic_DNA"/>
</dbReference>
<dbReference type="PIR" id="S73654">
    <property type="entry name" value="S73654"/>
</dbReference>
<dbReference type="RefSeq" id="NP_110202.1">
    <property type="nucleotide sequence ID" value="NC_000912.1"/>
</dbReference>
<dbReference type="RefSeq" id="WP_010874870.1">
    <property type="nucleotide sequence ID" value="NZ_OU342337.1"/>
</dbReference>
<dbReference type="IntAct" id="P75272">
    <property type="interactions" value="1"/>
</dbReference>
<dbReference type="STRING" id="272634.MPN_514"/>
<dbReference type="EnsemblBacteria" id="AAB95976">
    <property type="protein sequence ID" value="AAB95976"/>
    <property type="gene ID" value="MPN_514"/>
</dbReference>
<dbReference type="KEGG" id="mpn:MPN_514"/>
<dbReference type="PATRIC" id="fig|272634.6.peg.568"/>
<dbReference type="HOGENOM" id="CLU_2047112_0_0_14"/>
<dbReference type="BioCyc" id="MPNE272634:G1GJ3-844-MONOMER"/>
<dbReference type="Proteomes" id="UP000000808">
    <property type="component" value="Chromosome"/>
</dbReference>
<dbReference type="Gene3D" id="3.40.50.300">
    <property type="entry name" value="P-loop containing nucleotide triphosphate hydrolases"/>
    <property type="match status" value="1"/>
</dbReference>
<dbReference type="InterPro" id="IPR027417">
    <property type="entry name" value="P-loop_NTPase"/>
</dbReference>
<dbReference type="SUPFAM" id="SSF52540">
    <property type="entry name" value="P-loop containing nucleoside triphosphate hydrolases"/>
    <property type="match status" value="1"/>
</dbReference>
<sequence length="120" mass="13655">MEQDINNQTGKKIFLNEECFLELDKLPQHVSVLGVSGFGKSNILLHFLKYAIDNDHPLIFVNGKGDKELITQFEHYQTSAKQLSPEDGFDTVKLVALKNTSAKIWSLDDRIATIKYNPFK</sequence>
<protein>
    <recommendedName>
        <fullName>Uncharacterized protein MPN_514</fullName>
    </recommendedName>
</protein>